<reference key="1">
    <citation type="journal article" date="2011" name="PLoS Pathog.">
        <title>Comparative genomics yields insights into niche adaptation of plant vascular wilt pathogens.</title>
        <authorList>
            <person name="Klosterman S.J."/>
            <person name="Subbarao K.V."/>
            <person name="Kang S."/>
            <person name="Veronese P."/>
            <person name="Gold S.E."/>
            <person name="Thomma B.P.H.J."/>
            <person name="Chen Z."/>
            <person name="Henrissat B."/>
            <person name="Lee Y.-H."/>
            <person name="Park J."/>
            <person name="Garcia-Pedrajas M.D."/>
            <person name="Barbara D.J."/>
            <person name="Anchieta A."/>
            <person name="de Jonge R."/>
            <person name="Santhanam P."/>
            <person name="Maruthachalam K."/>
            <person name="Atallah Z."/>
            <person name="Amyotte S.G."/>
            <person name="Paz Z."/>
            <person name="Inderbitzin P."/>
            <person name="Hayes R.J."/>
            <person name="Heiman D.I."/>
            <person name="Young S."/>
            <person name="Zeng Q."/>
            <person name="Engels R."/>
            <person name="Galagan J."/>
            <person name="Cuomo C.A."/>
            <person name="Dobinson K.F."/>
            <person name="Ma L.-J."/>
        </authorList>
    </citation>
    <scope>NUCLEOTIDE SEQUENCE [LARGE SCALE GENOMIC DNA]</scope>
    <source>
        <strain>VaMs.102 / ATCC MYA-4576 / FGSC 10136</strain>
    </source>
</reference>
<sequence length="299" mass="34327">MLKSTARKRKAPSTGPSGLQRRVRARKEEVDSEIDESSNPSENEGSERSSDEDEEDEEPKASRSSKSNLDMASISFGALAKAQASMPKRSKKESAESEESEIDDSGSDSGNESKYRKRGGLAKRSSKHAPTEMSSKRPVSRKREIFQVPKVEARDPRFDPAVNSGGSNFDEAKAKKAYAFLDEYRDSEMAELRMEIRKTKDAAQKERLQTLLQSMQNRKKAAKRKDDEKRILEEHRQREKDLVQQGKQPFYLKKSEQKKRLLTEQFKGMKKKQVNKVIERKRKKVAAKEKMELDQLQRR</sequence>
<feature type="chain" id="PRO_0000397668" description="rRNA biogenesis protein RRP36">
    <location>
        <begin position="1"/>
        <end position="299"/>
    </location>
</feature>
<feature type="region of interest" description="Disordered" evidence="3">
    <location>
        <begin position="1"/>
        <end position="169"/>
    </location>
</feature>
<feature type="region of interest" description="Disordered" evidence="3">
    <location>
        <begin position="215"/>
        <end position="254"/>
    </location>
</feature>
<feature type="coiled-coil region" evidence="2">
    <location>
        <begin position="186"/>
        <end position="290"/>
    </location>
</feature>
<feature type="compositionally biased region" description="Basic residues" evidence="3">
    <location>
        <begin position="1"/>
        <end position="11"/>
    </location>
</feature>
<feature type="compositionally biased region" description="Acidic residues" evidence="3">
    <location>
        <begin position="96"/>
        <end position="106"/>
    </location>
</feature>
<feature type="compositionally biased region" description="Basic residues" evidence="3">
    <location>
        <begin position="115"/>
        <end position="127"/>
    </location>
</feature>
<feature type="compositionally biased region" description="Basic and acidic residues" evidence="3">
    <location>
        <begin position="141"/>
        <end position="158"/>
    </location>
</feature>
<feature type="compositionally biased region" description="Basic and acidic residues" evidence="3">
    <location>
        <begin position="224"/>
        <end position="242"/>
    </location>
</feature>
<name>RRP36_VERA1</name>
<accession>C9S8J9</accession>
<organism>
    <name type="scientific">Verticillium alfalfae (strain VaMs.102 / ATCC MYA-4576 / FGSC 10136)</name>
    <name type="common">Verticillium wilt of alfalfa</name>
    <name type="synonym">Verticillium albo-atrum</name>
    <dbReference type="NCBI Taxonomy" id="526221"/>
    <lineage>
        <taxon>Eukaryota</taxon>
        <taxon>Fungi</taxon>
        <taxon>Dikarya</taxon>
        <taxon>Ascomycota</taxon>
        <taxon>Pezizomycotina</taxon>
        <taxon>Sordariomycetes</taxon>
        <taxon>Hypocreomycetidae</taxon>
        <taxon>Glomerellales</taxon>
        <taxon>Plectosphaerellaceae</taxon>
        <taxon>Verticillium</taxon>
    </lineage>
</organism>
<proteinExistence type="inferred from homology"/>
<evidence type="ECO:0000250" key="1"/>
<evidence type="ECO:0000255" key="2"/>
<evidence type="ECO:0000256" key="3">
    <source>
        <dbReference type="SAM" id="MobiDB-lite"/>
    </source>
</evidence>
<evidence type="ECO:0000305" key="4"/>
<dbReference type="EMBL" id="DS985214">
    <property type="protein sequence ID" value="EEY13960.1"/>
    <property type="molecule type" value="Genomic_DNA"/>
</dbReference>
<dbReference type="RefSeq" id="XP_003008386.1">
    <property type="nucleotide sequence ID" value="XM_003008340.1"/>
</dbReference>
<dbReference type="SMR" id="C9S8J9"/>
<dbReference type="STRING" id="526221.C9S8J9"/>
<dbReference type="GeneID" id="9528490"/>
<dbReference type="KEGG" id="val:VDBG_00067"/>
<dbReference type="eggNOG" id="KOG3190">
    <property type="taxonomic scope" value="Eukaryota"/>
</dbReference>
<dbReference type="HOGENOM" id="CLU_048802_0_0_1"/>
<dbReference type="OMA" id="ERKEMPW"/>
<dbReference type="OrthoDB" id="448446at2759"/>
<dbReference type="Proteomes" id="UP000008698">
    <property type="component" value="Unassembled WGS sequence"/>
</dbReference>
<dbReference type="GO" id="GO:0030686">
    <property type="term" value="C:90S preribosome"/>
    <property type="evidence" value="ECO:0007669"/>
    <property type="project" value="TreeGrafter"/>
</dbReference>
<dbReference type="GO" id="GO:0005730">
    <property type="term" value="C:nucleolus"/>
    <property type="evidence" value="ECO:0007669"/>
    <property type="project" value="UniProtKB-SubCell"/>
</dbReference>
<dbReference type="GO" id="GO:0000462">
    <property type="term" value="P:maturation of SSU-rRNA from tricistronic rRNA transcript (SSU-rRNA, 5.8S rRNA, LSU-rRNA)"/>
    <property type="evidence" value="ECO:0007669"/>
    <property type="project" value="TreeGrafter"/>
</dbReference>
<dbReference type="InterPro" id="IPR009292">
    <property type="entry name" value="RRP36"/>
</dbReference>
<dbReference type="PANTHER" id="PTHR21738">
    <property type="entry name" value="RIBOSOMAL RNA PROCESSING PROTEIN 36 HOMOLOG"/>
    <property type="match status" value="1"/>
</dbReference>
<dbReference type="PANTHER" id="PTHR21738:SF0">
    <property type="entry name" value="RIBOSOMAL RNA PROCESSING PROTEIN 36 HOMOLOG"/>
    <property type="match status" value="1"/>
</dbReference>
<dbReference type="Pfam" id="PF06102">
    <property type="entry name" value="RRP36"/>
    <property type="match status" value="1"/>
</dbReference>
<keyword id="KW-0175">Coiled coil</keyword>
<keyword id="KW-0539">Nucleus</keyword>
<keyword id="KW-1185">Reference proteome</keyword>
<keyword id="KW-0687">Ribonucleoprotein</keyword>
<keyword id="KW-0690">Ribosome biogenesis</keyword>
<keyword id="KW-0698">rRNA processing</keyword>
<gene>
    <name type="primary">RRP36</name>
    <name type="ORF">VDBG_00067</name>
</gene>
<protein>
    <recommendedName>
        <fullName>rRNA biogenesis protein RRP36</fullName>
    </recommendedName>
    <alternativeName>
        <fullName>Ribosomal RNA-processing protein 36</fullName>
    </alternativeName>
</protein>
<comment type="function">
    <text evidence="1">Component of the 90S pre-ribosome involved in the maturation of rRNAs. Required for early cleavages of the pre-RNAs in the 40S ribosomal subunit maturation pathway (By similarity).</text>
</comment>
<comment type="subunit">
    <text evidence="1">Associates with 90S and pre-40S pre-ribosomal particles.</text>
</comment>
<comment type="subcellular location">
    <subcellularLocation>
        <location evidence="1">Nucleus</location>
        <location evidence="1">Nucleolus</location>
    </subcellularLocation>
</comment>
<comment type="similarity">
    <text evidence="4">Belongs to the RRP36 family.</text>
</comment>